<feature type="chain" id="PRO_0000272932" description="Large ribosomal subunit protein uL23cz/uL23cy">
    <location>
        <begin position="1"/>
        <end position="93"/>
    </location>
</feature>
<organism>
    <name type="scientific">Solanum bulbocastanum</name>
    <name type="common">Wild potato</name>
    <dbReference type="NCBI Taxonomy" id="147425"/>
    <lineage>
        <taxon>Eukaryota</taxon>
        <taxon>Viridiplantae</taxon>
        <taxon>Streptophyta</taxon>
        <taxon>Embryophyta</taxon>
        <taxon>Tracheophyta</taxon>
        <taxon>Spermatophyta</taxon>
        <taxon>Magnoliopsida</taxon>
        <taxon>eudicotyledons</taxon>
        <taxon>Gunneridae</taxon>
        <taxon>Pentapetalae</taxon>
        <taxon>asterids</taxon>
        <taxon>lamiids</taxon>
        <taxon>Solanales</taxon>
        <taxon>Solanaceae</taxon>
        <taxon>Solanoideae</taxon>
        <taxon>Solaneae</taxon>
        <taxon>Solanum</taxon>
    </lineage>
</organism>
<sequence length="93" mass="10763">MDGIKYAVFTDKSIRLLGKNQYTSNVESGSTRTEIKHWVELFFGVKVIAMNSHRLPGKSRRMGPIMGHTMHYRRMIITLQPGYSIPPLRKKRT</sequence>
<dbReference type="EMBL" id="DQ347958">
    <property type="protein sequence ID" value="ABC56255.1"/>
    <property type="molecule type" value="Genomic_DNA"/>
</dbReference>
<dbReference type="EMBL" id="DQ347958">
    <property type="protein sequence ID" value="ABC56278.1"/>
    <property type="molecule type" value="Genomic_DNA"/>
</dbReference>
<dbReference type="SMR" id="Q2MIE5"/>
<dbReference type="GO" id="GO:0009507">
    <property type="term" value="C:chloroplast"/>
    <property type="evidence" value="ECO:0007669"/>
    <property type="project" value="UniProtKB-SubCell"/>
</dbReference>
<dbReference type="GO" id="GO:1990904">
    <property type="term" value="C:ribonucleoprotein complex"/>
    <property type="evidence" value="ECO:0007669"/>
    <property type="project" value="UniProtKB-KW"/>
</dbReference>
<dbReference type="GO" id="GO:0005840">
    <property type="term" value="C:ribosome"/>
    <property type="evidence" value="ECO:0007669"/>
    <property type="project" value="UniProtKB-KW"/>
</dbReference>
<dbReference type="GO" id="GO:0003729">
    <property type="term" value="F:mRNA binding"/>
    <property type="evidence" value="ECO:0007669"/>
    <property type="project" value="UniProtKB-ARBA"/>
</dbReference>
<dbReference type="GO" id="GO:0019843">
    <property type="term" value="F:rRNA binding"/>
    <property type="evidence" value="ECO:0007669"/>
    <property type="project" value="UniProtKB-UniRule"/>
</dbReference>
<dbReference type="GO" id="GO:0003735">
    <property type="term" value="F:structural constituent of ribosome"/>
    <property type="evidence" value="ECO:0007669"/>
    <property type="project" value="InterPro"/>
</dbReference>
<dbReference type="GO" id="GO:0006412">
    <property type="term" value="P:translation"/>
    <property type="evidence" value="ECO:0007669"/>
    <property type="project" value="UniProtKB-UniRule"/>
</dbReference>
<dbReference type="FunFam" id="3.30.70.330:FF:000002">
    <property type="entry name" value="50S ribosomal protein L23, chloroplastic"/>
    <property type="match status" value="1"/>
</dbReference>
<dbReference type="Gene3D" id="3.30.70.330">
    <property type="match status" value="1"/>
</dbReference>
<dbReference type="HAMAP" id="MF_01369_B">
    <property type="entry name" value="Ribosomal_uL23_B"/>
    <property type="match status" value="1"/>
</dbReference>
<dbReference type="InterPro" id="IPR012677">
    <property type="entry name" value="Nucleotide-bd_a/b_plait_sf"/>
</dbReference>
<dbReference type="InterPro" id="IPR013025">
    <property type="entry name" value="Ribosomal_uL23-like"/>
</dbReference>
<dbReference type="InterPro" id="IPR012678">
    <property type="entry name" value="Ribosomal_uL23/eL15/eS24_sf"/>
</dbReference>
<dbReference type="InterPro" id="IPR001014">
    <property type="entry name" value="Ribosomal_uL23_CS"/>
</dbReference>
<dbReference type="PANTHER" id="PTHR11620">
    <property type="entry name" value="60S RIBOSOMAL PROTEIN L23A"/>
    <property type="match status" value="1"/>
</dbReference>
<dbReference type="Pfam" id="PF00276">
    <property type="entry name" value="Ribosomal_L23"/>
    <property type="match status" value="1"/>
</dbReference>
<dbReference type="SUPFAM" id="SSF54189">
    <property type="entry name" value="Ribosomal proteins S24e, L23 and L15e"/>
    <property type="match status" value="1"/>
</dbReference>
<dbReference type="PROSITE" id="PS00050">
    <property type="entry name" value="RIBOSOMAL_L23"/>
    <property type="match status" value="1"/>
</dbReference>
<gene>
    <name type="primary">rpl23-A</name>
</gene>
<gene>
    <name type="primary">rpl23-B</name>
</gene>
<comment type="function">
    <text evidence="1">Binds to 23S rRNA.</text>
</comment>
<comment type="subunit">
    <text evidence="1">Part of the 50S ribosomal subunit.</text>
</comment>
<comment type="subcellular location">
    <subcellularLocation>
        <location>Plastid</location>
        <location>Chloroplast</location>
    </subcellularLocation>
</comment>
<comment type="similarity">
    <text evidence="2">Belongs to the universal ribosomal protein uL23 family.</text>
</comment>
<evidence type="ECO:0000250" key="1"/>
<evidence type="ECO:0000305" key="2"/>
<geneLocation type="chloroplast"/>
<proteinExistence type="inferred from homology"/>
<keyword id="KW-0150">Chloroplast</keyword>
<keyword id="KW-0934">Plastid</keyword>
<keyword id="KW-0687">Ribonucleoprotein</keyword>
<keyword id="KW-0689">Ribosomal protein</keyword>
<keyword id="KW-0694">RNA-binding</keyword>
<keyword id="KW-0699">rRNA-binding</keyword>
<accession>Q2MIE5</accession>
<protein>
    <recommendedName>
        <fullName evidence="2">Large ribosomal subunit protein uL23cz/uL23cy</fullName>
    </recommendedName>
    <alternativeName>
        <fullName>50S ribosomal protein L23, chloroplastic</fullName>
    </alternativeName>
</protein>
<reference key="1">
    <citation type="journal article" date="2006" name="Theor. Appl. Genet.">
        <title>Complete chloroplast genome sequences of Solanum bulbocastanum, Solanum lycopersicum and comparative analyses with other Solanaceae genomes.</title>
        <authorList>
            <person name="Daniell H."/>
            <person name="Lee S.-B."/>
            <person name="Grevich J."/>
            <person name="Saski C."/>
            <person name="Quesada-Vargas T."/>
            <person name="Guda C."/>
            <person name="Tomkins J."/>
            <person name="Jansen R.K."/>
        </authorList>
    </citation>
    <scope>NUCLEOTIDE SEQUENCE [LARGE SCALE GENOMIC DNA]</scope>
    <source>
        <strain>cv. PT29</strain>
    </source>
</reference>
<name>RK23_SOLBU</name>